<organism>
    <name type="scientific">Bacillus subtilis (strain 168)</name>
    <dbReference type="NCBI Taxonomy" id="224308"/>
    <lineage>
        <taxon>Bacteria</taxon>
        <taxon>Bacillati</taxon>
        <taxon>Bacillota</taxon>
        <taxon>Bacilli</taxon>
        <taxon>Bacillales</taxon>
        <taxon>Bacillaceae</taxon>
        <taxon>Bacillus</taxon>
    </lineage>
</organism>
<proteinExistence type="evidence at protein level"/>
<protein>
    <recommendedName>
        <fullName>Sirohydrochlorin ferrochelatase</fullName>
        <ecNumber>4.99.1.4</ecNumber>
    </recommendedName>
</protein>
<dbReference type="EC" id="4.99.1.4"/>
<dbReference type="EMBL" id="AJ000974">
    <property type="protein sequence ID" value="CAA04414.1"/>
    <property type="molecule type" value="Genomic_DNA"/>
</dbReference>
<dbReference type="EMBL" id="AL009126">
    <property type="protein sequence ID" value="CAB13436.1"/>
    <property type="molecule type" value="Genomic_DNA"/>
</dbReference>
<dbReference type="PIR" id="E69877">
    <property type="entry name" value="E69877"/>
</dbReference>
<dbReference type="RefSeq" id="NP_389445.1">
    <property type="nucleotide sequence ID" value="NC_000964.3"/>
</dbReference>
<dbReference type="RefSeq" id="WP_003232093.1">
    <property type="nucleotide sequence ID" value="NZ_OZ025638.1"/>
</dbReference>
<dbReference type="PDB" id="5ZT7">
    <property type="method" value="X-ray"/>
    <property type="resolution" value="2.94 A"/>
    <property type="chains" value="A/B=1-261"/>
</dbReference>
<dbReference type="PDB" id="5ZT8">
    <property type="method" value="X-ray"/>
    <property type="resolution" value="2.00 A"/>
    <property type="chains" value="A/B=1-261"/>
</dbReference>
<dbReference type="PDB" id="5ZT9">
    <property type="method" value="X-ray"/>
    <property type="resolution" value="2.80 A"/>
    <property type="chains" value="A/B=1-261"/>
</dbReference>
<dbReference type="PDB" id="5ZTA">
    <property type="method" value="X-ray"/>
    <property type="resolution" value="3.07 A"/>
    <property type="chains" value="A/B=1-261"/>
</dbReference>
<dbReference type="PDBsum" id="5ZT7"/>
<dbReference type="PDBsum" id="5ZT8"/>
<dbReference type="PDBsum" id="5ZT9"/>
<dbReference type="PDBsum" id="5ZTA"/>
<dbReference type="SMR" id="O34632"/>
<dbReference type="FunCoup" id="O34632">
    <property type="interactions" value="184"/>
</dbReference>
<dbReference type="STRING" id="224308.BSU15620"/>
<dbReference type="PaxDb" id="224308-BSU15620"/>
<dbReference type="DNASU" id="936218"/>
<dbReference type="EnsemblBacteria" id="CAB13436">
    <property type="protein sequence ID" value="CAB13436"/>
    <property type="gene ID" value="BSU_15620"/>
</dbReference>
<dbReference type="GeneID" id="936218"/>
<dbReference type="KEGG" id="bsu:BSU15620"/>
<dbReference type="PATRIC" id="fig|224308.179.peg.1702"/>
<dbReference type="eggNOG" id="COG2138">
    <property type="taxonomic scope" value="Bacteria"/>
</dbReference>
<dbReference type="InParanoid" id="O34632"/>
<dbReference type="OrthoDB" id="9797895at2"/>
<dbReference type="PhylomeDB" id="O34632"/>
<dbReference type="BioCyc" id="BSUB:BSU15620-MONOMER"/>
<dbReference type="UniPathway" id="UPA00262">
    <property type="reaction ID" value="UER00376"/>
</dbReference>
<dbReference type="Proteomes" id="UP000001570">
    <property type="component" value="Chromosome"/>
</dbReference>
<dbReference type="GO" id="GO:0046872">
    <property type="term" value="F:metal ion binding"/>
    <property type="evidence" value="ECO:0007669"/>
    <property type="project" value="UniProtKB-KW"/>
</dbReference>
<dbReference type="GO" id="GO:0051266">
    <property type="term" value="F:sirohydrochlorin ferrochelatase activity"/>
    <property type="evidence" value="ECO:0007669"/>
    <property type="project" value="UniProtKB-EC"/>
</dbReference>
<dbReference type="GO" id="GO:0019354">
    <property type="term" value="P:siroheme biosynthetic process"/>
    <property type="evidence" value="ECO:0007669"/>
    <property type="project" value="UniProtKB-UniPathway"/>
</dbReference>
<dbReference type="CDD" id="cd03414">
    <property type="entry name" value="CbiX_SirB_C"/>
    <property type="match status" value="1"/>
</dbReference>
<dbReference type="CDD" id="cd03416">
    <property type="entry name" value="CbiX_SirB_N"/>
    <property type="match status" value="1"/>
</dbReference>
<dbReference type="Gene3D" id="3.40.50.1400">
    <property type="match status" value="2"/>
</dbReference>
<dbReference type="InterPro" id="IPR002762">
    <property type="entry name" value="CbiX-like"/>
</dbReference>
<dbReference type="InterPro" id="IPR050963">
    <property type="entry name" value="Sirohydro_Cobaltochel/CbiX"/>
</dbReference>
<dbReference type="PANTHER" id="PTHR33542">
    <property type="entry name" value="SIROHYDROCHLORIN FERROCHELATASE, CHLOROPLASTIC"/>
    <property type="match status" value="1"/>
</dbReference>
<dbReference type="PANTHER" id="PTHR33542:SF3">
    <property type="entry name" value="SIROHYDROCHLORIN FERROCHELATASE, CHLOROPLASTIC"/>
    <property type="match status" value="1"/>
</dbReference>
<dbReference type="Pfam" id="PF01903">
    <property type="entry name" value="CbiX"/>
    <property type="match status" value="2"/>
</dbReference>
<dbReference type="SUPFAM" id="SSF53800">
    <property type="entry name" value="Chelatase"/>
    <property type="match status" value="1"/>
</dbReference>
<reference key="1">
    <citation type="submission" date="1997-10" db="EMBL/GenBank/DDBJ databases">
        <title>Cloning and sequencing 8 Kbp of DNA from Bacillus subtilis downstream of the pyr operon.</title>
        <authorList>
            <person name="Foulger D."/>
            <person name="Errington J."/>
        </authorList>
    </citation>
    <scope>NUCLEOTIDE SEQUENCE [GENOMIC DNA]</scope>
    <source>
        <strain>168</strain>
    </source>
</reference>
<reference key="2">
    <citation type="journal article" date="1997" name="Nature">
        <title>The complete genome sequence of the Gram-positive bacterium Bacillus subtilis.</title>
        <authorList>
            <person name="Kunst F."/>
            <person name="Ogasawara N."/>
            <person name="Moszer I."/>
            <person name="Albertini A.M."/>
            <person name="Alloni G."/>
            <person name="Azevedo V."/>
            <person name="Bertero M.G."/>
            <person name="Bessieres P."/>
            <person name="Bolotin A."/>
            <person name="Borchert S."/>
            <person name="Borriss R."/>
            <person name="Boursier L."/>
            <person name="Brans A."/>
            <person name="Braun M."/>
            <person name="Brignell S.C."/>
            <person name="Bron S."/>
            <person name="Brouillet S."/>
            <person name="Bruschi C.V."/>
            <person name="Caldwell B."/>
            <person name="Capuano V."/>
            <person name="Carter N.M."/>
            <person name="Choi S.-K."/>
            <person name="Codani J.-J."/>
            <person name="Connerton I.F."/>
            <person name="Cummings N.J."/>
            <person name="Daniel R.A."/>
            <person name="Denizot F."/>
            <person name="Devine K.M."/>
            <person name="Duesterhoeft A."/>
            <person name="Ehrlich S.D."/>
            <person name="Emmerson P.T."/>
            <person name="Entian K.-D."/>
            <person name="Errington J."/>
            <person name="Fabret C."/>
            <person name="Ferrari E."/>
            <person name="Foulger D."/>
            <person name="Fritz C."/>
            <person name="Fujita M."/>
            <person name="Fujita Y."/>
            <person name="Fuma S."/>
            <person name="Galizzi A."/>
            <person name="Galleron N."/>
            <person name="Ghim S.-Y."/>
            <person name="Glaser P."/>
            <person name="Goffeau A."/>
            <person name="Golightly E.J."/>
            <person name="Grandi G."/>
            <person name="Guiseppi G."/>
            <person name="Guy B.J."/>
            <person name="Haga K."/>
            <person name="Haiech J."/>
            <person name="Harwood C.R."/>
            <person name="Henaut A."/>
            <person name="Hilbert H."/>
            <person name="Holsappel S."/>
            <person name="Hosono S."/>
            <person name="Hullo M.-F."/>
            <person name="Itaya M."/>
            <person name="Jones L.-M."/>
            <person name="Joris B."/>
            <person name="Karamata D."/>
            <person name="Kasahara Y."/>
            <person name="Klaerr-Blanchard M."/>
            <person name="Klein C."/>
            <person name="Kobayashi Y."/>
            <person name="Koetter P."/>
            <person name="Koningstein G."/>
            <person name="Krogh S."/>
            <person name="Kumano M."/>
            <person name="Kurita K."/>
            <person name="Lapidus A."/>
            <person name="Lardinois S."/>
            <person name="Lauber J."/>
            <person name="Lazarevic V."/>
            <person name="Lee S.-M."/>
            <person name="Levine A."/>
            <person name="Liu H."/>
            <person name="Masuda S."/>
            <person name="Mauel C."/>
            <person name="Medigue C."/>
            <person name="Medina N."/>
            <person name="Mellado R.P."/>
            <person name="Mizuno M."/>
            <person name="Moestl D."/>
            <person name="Nakai S."/>
            <person name="Noback M."/>
            <person name="Noone D."/>
            <person name="O'Reilly M."/>
            <person name="Ogawa K."/>
            <person name="Ogiwara A."/>
            <person name="Oudega B."/>
            <person name="Park S.-H."/>
            <person name="Parro V."/>
            <person name="Pohl T.M."/>
            <person name="Portetelle D."/>
            <person name="Porwollik S."/>
            <person name="Prescott A.M."/>
            <person name="Presecan E."/>
            <person name="Pujic P."/>
            <person name="Purnelle B."/>
            <person name="Rapoport G."/>
            <person name="Rey M."/>
            <person name="Reynolds S."/>
            <person name="Rieger M."/>
            <person name="Rivolta C."/>
            <person name="Rocha E."/>
            <person name="Roche B."/>
            <person name="Rose M."/>
            <person name="Sadaie Y."/>
            <person name="Sato T."/>
            <person name="Scanlan E."/>
            <person name="Schleich S."/>
            <person name="Schroeter R."/>
            <person name="Scoffone F."/>
            <person name="Sekiguchi J."/>
            <person name="Sekowska A."/>
            <person name="Seror S.J."/>
            <person name="Serror P."/>
            <person name="Shin B.-S."/>
            <person name="Soldo B."/>
            <person name="Sorokin A."/>
            <person name="Tacconi E."/>
            <person name="Takagi T."/>
            <person name="Takahashi H."/>
            <person name="Takemaru K."/>
            <person name="Takeuchi M."/>
            <person name="Tamakoshi A."/>
            <person name="Tanaka T."/>
            <person name="Terpstra P."/>
            <person name="Tognoni A."/>
            <person name="Tosato V."/>
            <person name="Uchiyama S."/>
            <person name="Vandenbol M."/>
            <person name="Vannier F."/>
            <person name="Vassarotti A."/>
            <person name="Viari A."/>
            <person name="Wambutt R."/>
            <person name="Wedler E."/>
            <person name="Wedler H."/>
            <person name="Weitzenegger T."/>
            <person name="Winters P."/>
            <person name="Wipat A."/>
            <person name="Yamamoto H."/>
            <person name="Yamane K."/>
            <person name="Yasumoto K."/>
            <person name="Yata K."/>
            <person name="Yoshida K."/>
            <person name="Yoshikawa H.-F."/>
            <person name="Zumstein E."/>
            <person name="Yoshikawa H."/>
            <person name="Danchin A."/>
        </authorList>
    </citation>
    <scope>NUCLEOTIDE SEQUENCE [LARGE SCALE GENOMIC DNA]</scope>
    <source>
        <strain>168</strain>
    </source>
</reference>
<reference key="3">
    <citation type="journal article" date="2000" name="J. Bacteriol.">
        <title>Transcriptional control of the sulfur-regulated cysH operon, containing genes involved in L-cysteine biosynthesis in Bacillus subtilis.</title>
        <authorList>
            <person name="Mansilla M.C."/>
            <person name="Albanesi D."/>
            <person name="de Mendoza D."/>
        </authorList>
    </citation>
    <scope>INDUCTION</scope>
    <source>
        <strain>168 / JH642</strain>
    </source>
</reference>
<sequence>MKQAILYVGHGSRVKKAQQEAAAFLEGCKAHISVPVQEISFLELQEPTIETGFEACVKQGATHIAVVPLLLLTAAHAKHDIPEEIVRVASRYPSVRISYGKPIGIDEEVVKAVYHRMKDIGVPYENARVVLIGRGSSDPDVKRDVTGIANLLQEMVPVKEVIPCFLTACGPNYKEVFSELEKDDGITTFIVPYLLFTGMLMNEIEREVQKLKAHNPNVYLSSYIGFHPHVKNAFLNRVRETAANSEGQFDFDGGSYASAAH</sequence>
<feature type="chain" id="PRO_0000150366" description="Sirohydrochlorin ferrochelatase">
    <location>
        <begin position="1"/>
        <end position="261"/>
    </location>
</feature>
<feature type="binding site" evidence="1">
    <location>
        <position position="10"/>
    </location>
    <ligand>
        <name>Fe cation</name>
        <dbReference type="ChEBI" id="CHEBI:24875"/>
    </ligand>
</feature>
<feature type="binding site" evidence="1">
    <location>
        <position position="76"/>
    </location>
    <ligand>
        <name>Fe cation</name>
        <dbReference type="ChEBI" id="CHEBI:24875"/>
    </ligand>
</feature>
<feature type="strand" evidence="4">
    <location>
        <begin position="3"/>
        <end position="9"/>
    </location>
</feature>
<feature type="helix" evidence="4">
    <location>
        <begin position="15"/>
        <end position="28"/>
    </location>
</feature>
<feature type="helix" evidence="4">
    <location>
        <begin position="29"/>
        <end position="31"/>
    </location>
</feature>
<feature type="strand" evidence="4">
    <location>
        <begin position="35"/>
        <end position="48"/>
    </location>
</feature>
<feature type="helix" evidence="4">
    <location>
        <begin position="49"/>
        <end position="58"/>
    </location>
</feature>
<feature type="strand" evidence="4">
    <location>
        <begin position="62"/>
        <end position="69"/>
    </location>
</feature>
<feature type="helix" evidence="4">
    <location>
        <begin position="75"/>
        <end position="78"/>
    </location>
</feature>
<feature type="helix" evidence="4">
    <location>
        <begin position="80"/>
        <end position="89"/>
    </location>
</feature>
<feature type="strand" evidence="4">
    <location>
        <begin position="95"/>
        <end position="99"/>
    </location>
</feature>
<feature type="helix" evidence="4">
    <location>
        <begin position="107"/>
        <end position="118"/>
    </location>
</feature>
<feature type="strand" evidence="4">
    <location>
        <begin position="128"/>
        <end position="133"/>
    </location>
</feature>
<feature type="helix" evidence="4">
    <location>
        <begin position="139"/>
        <end position="155"/>
    </location>
</feature>
<feature type="strand" evidence="4">
    <location>
        <begin position="159"/>
        <end position="172"/>
    </location>
</feature>
<feature type="helix" evidence="4">
    <location>
        <begin position="173"/>
        <end position="179"/>
    </location>
</feature>
<feature type="strand" evidence="4">
    <location>
        <begin position="188"/>
        <end position="192"/>
    </location>
</feature>
<feature type="helix" evidence="4">
    <location>
        <begin position="199"/>
        <end position="214"/>
    </location>
</feature>
<feature type="strand" evidence="4">
    <location>
        <begin position="216"/>
        <end position="220"/>
    </location>
</feature>
<feature type="helix" evidence="4">
    <location>
        <begin position="228"/>
        <end position="243"/>
    </location>
</feature>
<comment type="function">
    <text evidence="1">Chelates iron to the siroheme precursor.</text>
</comment>
<comment type="catalytic activity">
    <reaction>
        <text>siroheme + 2 H(+) = sirohydrochlorin + Fe(2+)</text>
        <dbReference type="Rhea" id="RHEA:24360"/>
        <dbReference type="ChEBI" id="CHEBI:15378"/>
        <dbReference type="ChEBI" id="CHEBI:29033"/>
        <dbReference type="ChEBI" id="CHEBI:58351"/>
        <dbReference type="ChEBI" id="CHEBI:60052"/>
        <dbReference type="EC" id="4.99.1.4"/>
    </reaction>
</comment>
<comment type="pathway">
    <text>Porphyrin-containing compound metabolism; siroheme biosynthesis; siroheme from sirohydrochlorin: step 1/1.</text>
</comment>
<comment type="induction">
    <text evidence="2">Up-regulated by sulfur starvation and repressed by cysteine. Also induced by O-acetyl-L-serine (OAS), a direct precursor of cysteine, maybe via inactivation of a putative transcriptional repressor of the cysH operon whose activity is controlled by the intracellular levels of OAS.</text>
</comment>
<comment type="similarity">
    <text evidence="3">Belongs to the CbiX family. SirB subfamily.</text>
</comment>
<gene>
    <name type="primary">sirB</name>
    <name type="synonym">ylnE</name>
    <name type="ordered locus">BSU15620</name>
</gene>
<evidence type="ECO:0000250" key="1"/>
<evidence type="ECO:0000269" key="2">
    <source>
    </source>
</evidence>
<evidence type="ECO:0000305" key="3"/>
<evidence type="ECO:0007829" key="4">
    <source>
        <dbReference type="PDB" id="5ZT8"/>
    </source>
</evidence>
<name>SIRB_BACSU</name>
<accession>O34632</accession>
<keyword id="KW-0002">3D-structure</keyword>
<keyword id="KW-0408">Iron</keyword>
<keyword id="KW-0456">Lyase</keyword>
<keyword id="KW-0479">Metal-binding</keyword>
<keyword id="KW-0627">Porphyrin biosynthesis</keyword>
<keyword id="KW-1185">Reference proteome</keyword>